<accession>Q8UC70</accession>
<proteinExistence type="inferred from homology"/>
<reference key="1">
    <citation type="journal article" date="2001" name="Science">
        <title>The genome of the natural genetic engineer Agrobacterium tumefaciens C58.</title>
        <authorList>
            <person name="Wood D.W."/>
            <person name="Setubal J.C."/>
            <person name="Kaul R."/>
            <person name="Monks D.E."/>
            <person name="Kitajima J.P."/>
            <person name="Okura V.K."/>
            <person name="Zhou Y."/>
            <person name="Chen L."/>
            <person name="Wood G.E."/>
            <person name="Almeida N.F. Jr."/>
            <person name="Woo L."/>
            <person name="Chen Y."/>
            <person name="Paulsen I.T."/>
            <person name="Eisen J.A."/>
            <person name="Karp P.D."/>
            <person name="Bovee D. Sr."/>
            <person name="Chapman P."/>
            <person name="Clendenning J."/>
            <person name="Deatherage G."/>
            <person name="Gillet W."/>
            <person name="Grant C."/>
            <person name="Kutyavin T."/>
            <person name="Levy R."/>
            <person name="Li M.-J."/>
            <person name="McClelland E."/>
            <person name="Palmieri A."/>
            <person name="Raymond C."/>
            <person name="Rouse G."/>
            <person name="Saenphimmachak C."/>
            <person name="Wu Z."/>
            <person name="Romero P."/>
            <person name="Gordon D."/>
            <person name="Zhang S."/>
            <person name="Yoo H."/>
            <person name="Tao Y."/>
            <person name="Biddle P."/>
            <person name="Jung M."/>
            <person name="Krespan W."/>
            <person name="Perry M."/>
            <person name="Gordon-Kamm B."/>
            <person name="Liao L."/>
            <person name="Kim S."/>
            <person name="Hendrick C."/>
            <person name="Zhao Z.-Y."/>
            <person name="Dolan M."/>
            <person name="Chumley F."/>
            <person name="Tingey S.V."/>
            <person name="Tomb J.-F."/>
            <person name="Gordon M.P."/>
            <person name="Olson M.V."/>
            <person name="Nester E.W."/>
        </authorList>
    </citation>
    <scope>NUCLEOTIDE SEQUENCE [LARGE SCALE GENOMIC DNA]</scope>
    <source>
        <strain>C58 / ATCC 33970</strain>
    </source>
</reference>
<reference key="2">
    <citation type="journal article" date="2001" name="Science">
        <title>Genome sequence of the plant pathogen and biotechnology agent Agrobacterium tumefaciens C58.</title>
        <authorList>
            <person name="Goodner B."/>
            <person name="Hinkle G."/>
            <person name="Gattung S."/>
            <person name="Miller N."/>
            <person name="Blanchard M."/>
            <person name="Qurollo B."/>
            <person name="Goldman B.S."/>
            <person name="Cao Y."/>
            <person name="Askenazi M."/>
            <person name="Halling C."/>
            <person name="Mullin L."/>
            <person name="Houmiel K."/>
            <person name="Gordon J."/>
            <person name="Vaudin M."/>
            <person name="Iartchouk O."/>
            <person name="Epp A."/>
            <person name="Liu F."/>
            <person name="Wollam C."/>
            <person name="Allinger M."/>
            <person name="Doughty D."/>
            <person name="Scott C."/>
            <person name="Lappas C."/>
            <person name="Markelz B."/>
            <person name="Flanagan C."/>
            <person name="Crowell C."/>
            <person name="Gurson J."/>
            <person name="Lomo C."/>
            <person name="Sear C."/>
            <person name="Strub G."/>
            <person name="Cielo C."/>
            <person name="Slater S."/>
        </authorList>
    </citation>
    <scope>NUCLEOTIDE SEQUENCE [LARGE SCALE GENOMIC DNA]</scope>
    <source>
        <strain>C58 / ATCC 33970</strain>
    </source>
</reference>
<dbReference type="EMBL" id="AE007869">
    <property type="protein sequence ID" value="AAK88349.1"/>
    <property type="molecule type" value="Genomic_DNA"/>
</dbReference>
<dbReference type="PIR" id="AC2899">
    <property type="entry name" value="AC2899"/>
</dbReference>
<dbReference type="PIR" id="D97674">
    <property type="entry name" value="D97674"/>
</dbReference>
<dbReference type="RefSeq" id="NP_355564.1">
    <property type="nucleotide sequence ID" value="NC_003062.2"/>
</dbReference>
<dbReference type="RefSeq" id="WP_010972446.1">
    <property type="nucleotide sequence ID" value="NC_003062.2"/>
</dbReference>
<dbReference type="SMR" id="Q8UC70"/>
<dbReference type="STRING" id="176299.Atu2628"/>
<dbReference type="EnsemblBacteria" id="AAK88349">
    <property type="protein sequence ID" value="AAK88349"/>
    <property type="gene ID" value="Atu2628"/>
</dbReference>
<dbReference type="GeneID" id="1134666"/>
<dbReference type="KEGG" id="atu:Atu2628"/>
<dbReference type="PATRIC" id="fig|176299.10.peg.2631"/>
<dbReference type="eggNOG" id="COG4974">
    <property type="taxonomic scope" value="Bacteria"/>
</dbReference>
<dbReference type="HOGENOM" id="CLU_027562_9_0_5"/>
<dbReference type="OrthoDB" id="9801717at2"/>
<dbReference type="PhylomeDB" id="Q8UC70"/>
<dbReference type="BioCyc" id="AGRO:ATU2628-MONOMER"/>
<dbReference type="Proteomes" id="UP000000813">
    <property type="component" value="Chromosome circular"/>
</dbReference>
<dbReference type="GO" id="GO:0005737">
    <property type="term" value="C:cytoplasm"/>
    <property type="evidence" value="ECO:0007669"/>
    <property type="project" value="UniProtKB-SubCell"/>
</dbReference>
<dbReference type="GO" id="GO:0003677">
    <property type="term" value="F:DNA binding"/>
    <property type="evidence" value="ECO:0007669"/>
    <property type="project" value="UniProtKB-KW"/>
</dbReference>
<dbReference type="GO" id="GO:0009037">
    <property type="term" value="F:tyrosine-based site-specific recombinase activity"/>
    <property type="evidence" value="ECO:0007669"/>
    <property type="project" value="UniProtKB-UniRule"/>
</dbReference>
<dbReference type="GO" id="GO:0051301">
    <property type="term" value="P:cell division"/>
    <property type="evidence" value="ECO:0007669"/>
    <property type="project" value="UniProtKB-KW"/>
</dbReference>
<dbReference type="GO" id="GO:0007059">
    <property type="term" value="P:chromosome segregation"/>
    <property type="evidence" value="ECO:0007669"/>
    <property type="project" value="UniProtKB-UniRule"/>
</dbReference>
<dbReference type="GO" id="GO:0006313">
    <property type="term" value="P:DNA transposition"/>
    <property type="evidence" value="ECO:0007669"/>
    <property type="project" value="UniProtKB-UniRule"/>
</dbReference>
<dbReference type="Gene3D" id="1.10.150.130">
    <property type="match status" value="1"/>
</dbReference>
<dbReference type="Gene3D" id="1.10.443.10">
    <property type="entry name" value="Intergrase catalytic core"/>
    <property type="match status" value="1"/>
</dbReference>
<dbReference type="HAMAP" id="MF_01808">
    <property type="entry name" value="Recomb_XerC_XerD"/>
    <property type="match status" value="1"/>
</dbReference>
<dbReference type="InterPro" id="IPR044068">
    <property type="entry name" value="CB"/>
</dbReference>
<dbReference type="InterPro" id="IPR011010">
    <property type="entry name" value="DNA_brk_join_enz"/>
</dbReference>
<dbReference type="InterPro" id="IPR013762">
    <property type="entry name" value="Integrase-like_cat_sf"/>
</dbReference>
<dbReference type="InterPro" id="IPR002104">
    <property type="entry name" value="Integrase_catalytic"/>
</dbReference>
<dbReference type="InterPro" id="IPR010998">
    <property type="entry name" value="Integrase_recombinase_N"/>
</dbReference>
<dbReference type="InterPro" id="IPR004107">
    <property type="entry name" value="Integrase_SAM-like_N"/>
</dbReference>
<dbReference type="InterPro" id="IPR023009">
    <property type="entry name" value="Tyrosine_recombinase_XerC/XerD"/>
</dbReference>
<dbReference type="InterPro" id="IPR050090">
    <property type="entry name" value="Tyrosine_recombinase_XerCD"/>
</dbReference>
<dbReference type="PANTHER" id="PTHR30349">
    <property type="entry name" value="PHAGE INTEGRASE-RELATED"/>
    <property type="match status" value="1"/>
</dbReference>
<dbReference type="PANTHER" id="PTHR30349:SF90">
    <property type="entry name" value="TYROSINE RECOMBINASE XERD"/>
    <property type="match status" value="1"/>
</dbReference>
<dbReference type="Pfam" id="PF02899">
    <property type="entry name" value="Phage_int_SAM_1"/>
    <property type="match status" value="1"/>
</dbReference>
<dbReference type="Pfam" id="PF00589">
    <property type="entry name" value="Phage_integrase"/>
    <property type="match status" value="1"/>
</dbReference>
<dbReference type="SUPFAM" id="SSF56349">
    <property type="entry name" value="DNA breaking-rejoining enzymes"/>
    <property type="match status" value="1"/>
</dbReference>
<dbReference type="PROSITE" id="PS51900">
    <property type="entry name" value="CB"/>
    <property type="match status" value="1"/>
</dbReference>
<dbReference type="PROSITE" id="PS51898">
    <property type="entry name" value="TYR_RECOMBINASE"/>
    <property type="match status" value="1"/>
</dbReference>
<gene>
    <name evidence="1" type="primary">xerC</name>
    <name type="ordered locus">Atu2628</name>
    <name type="ORF">AGR_C_4764</name>
</gene>
<sequence>MEYRVTEILTFAEPDLLNERQSWLATLAGERRLADNTVEAYERDTRQFLRFLTGYIGRPAAIRDIADLRPVDLRAFLANRRKEGAGARSLGRHLAGLRSLLHHLQKKGLVNAAGATAMRAPKQPKSLPKPLTDRQALKITTAEAQLNEEPWIAARNAAVLSLLYGCGLRISEALGLTPADFPPGTRSLRITGKGNKTRIVPLLAVVTEAVDTYRKLCPYALAADEPMFLGARGGKLQPAIIQREMQKLRGAFGLPENATPHALRHSFATHLLAGGGDLRTIQELLGHASLSTTQVYTGVDTARLLEIYDNAHPRA</sequence>
<name>XERC_AGRFC</name>
<comment type="function">
    <text evidence="1">Site-specific tyrosine recombinase, which acts by catalyzing the cutting and rejoining of the recombining DNA molecules. The XerC-XerD complex is essential to convert dimers of the bacterial chromosome into monomers to permit their segregation at cell division. It also contributes to the segregational stability of plasmids.</text>
</comment>
<comment type="subunit">
    <text evidence="1">Forms a cyclic heterotetrameric complex composed of two molecules of XerC and two molecules of XerD.</text>
</comment>
<comment type="subcellular location">
    <subcellularLocation>
        <location evidence="1">Cytoplasm</location>
    </subcellularLocation>
</comment>
<comment type="similarity">
    <text evidence="1">Belongs to the 'phage' integrase family. XerC subfamily.</text>
</comment>
<feature type="chain" id="PRO_0000095282" description="Tyrosine recombinase XerC">
    <location>
        <begin position="1"/>
        <end position="315"/>
    </location>
</feature>
<feature type="domain" description="Core-binding (CB)" evidence="3">
    <location>
        <begin position="14"/>
        <end position="105"/>
    </location>
</feature>
<feature type="domain" description="Tyr recombinase" evidence="2">
    <location>
        <begin position="126"/>
        <end position="309"/>
    </location>
</feature>
<feature type="active site" evidence="1">
    <location>
        <position position="169"/>
    </location>
</feature>
<feature type="active site" evidence="1">
    <location>
        <position position="193"/>
    </location>
</feature>
<feature type="active site" evidence="1">
    <location>
        <position position="261"/>
    </location>
</feature>
<feature type="active site" evidence="1">
    <location>
        <position position="264"/>
    </location>
</feature>
<feature type="active site" evidence="1">
    <location>
        <position position="287"/>
    </location>
</feature>
<feature type="active site" description="O-(3'-phospho-DNA)-tyrosine intermediate" evidence="1">
    <location>
        <position position="296"/>
    </location>
</feature>
<evidence type="ECO:0000255" key="1">
    <source>
        <dbReference type="HAMAP-Rule" id="MF_01808"/>
    </source>
</evidence>
<evidence type="ECO:0000255" key="2">
    <source>
        <dbReference type="PROSITE-ProRule" id="PRU01246"/>
    </source>
</evidence>
<evidence type="ECO:0000255" key="3">
    <source>
        <dbReference type="PROSITE-ProRule" id="PRU01248"/>
    </source>
</evidence>
<protein>
    <recommendedName>
        <fullName evidence="1">Tyrosine recombinase XerC</fullName>
    </recommendedName>
</protein>
<keyword id="KW-0131">Cell cycle</keyword>
<keyword id="KW-0132">Cell division</keyword>
<keyword id="KW-0159">Chromosome partition</keyword>
<keyword id="KW-0963">Cytoplasm</keyword>
<keyword id="KW-0229">DNA integration</keyword>
<keyword id="KW-0233">DNA recombination</keyword>
<keyword id="KW-0238">DNA-binding</keyword>
<keyword id="KW-1185">Reference proteome</keyword>
<organism>
    <name type="scientific">Agrobacterium fabrum (strain C58 / ATCC 33970)</name>
    <name type="common">Agrobacterium tumefaciens (strain C58)</name>
    <dbReference type="NCBI Taxonomy" id="176299"/>
    <lineage>
        <taxon>Bacteria</taxon>
        <taxon>Pseudomonadati</taxon>
        <taxon>Pseudomonadota</taxon>
        <taxon>Alphaproteobacteria</taxon>
        <taxon>Hyphomicrobiales</taxon>
        <taxon>Rhizobiaceae</taxon>
        <taxon>Rhizobium/Agrobacterium group</taxon>
        <taxon>Agrobacterium</taxon>
        <taxon>Agrobacterium tumefaciens complex</taxon>
    </lineage>
</organism>